<organism>
    <name type="scientific">Aliivibrio salmonicida (strain LFI1238)</name>
    <name type="common">Vibrio salmonicida (strain LFI1238)</name>
    <dbReference type="NCBI Taxonomy" id="316275"/>
    <lineage>
        <taxon>Bacteria</taxon>
        <taxon>Pseudomonadati</taxon>
        <taxon>Pseudomonadota</taxon>
        <taxon>Gammaproteobacteria</taxon>
        <taxon>Vibrionales</taxon>
        <taxon>Vibrionaceae</taxon>
        <taxon>Aliivibrio</taxon>
    </lineage>
</organism>
<feature type="chain" id="PRO_1000194975" description="Ribosomal RNA large subunit methyltransferase E">
    <location>
        <begin position="1"/>
        <end position="209"/>
    </location>
</feature>
<feature type="active site" description="Proton acceptor" evidence="1">
    <location>
        <position position="164"/>
    </location>
</feature>
<feature type="binding site" evidence="1">
    <location>
        <position position="63"/>
    </location>
    <ligand>
        <name>S-adenosyl-L-methionine</name>
        <dbReference type="ChEBI" id="CHEBI:59789"/>
    </ligand>
</feature>
<feature type="binding site" evidence="1">
    <location>
        <position position="65"/>
    </location>
    <ligand>
        <name>S-adenosyl-L-methionine</name>
        <dbReference type="ChEBI" id="CHEBI:59789"/>
    </ligand>
</feature>
<feature type="binding site" evidence="1">
    <location>
        <position position="83"/>
    </location>
    <ligand>
        <name>S-adenosyl-L-methionine</name>
        <dbReference type="ChEBI" id="CHEBI:59789"/>
    </ligand>
</feature>
<feature type="binding site" evidence="1">
    <location>
        <position position="99"/>
    </location>
    <ligand>
        <name>S-adenosyl-L-methionine</name>
        <dbReference type="ChEBI" id="CHEBI:59789"/>
    </ligand>
</feature>
<feature type="binding site" evidence="1">
    <location>
        <position position="124"/>
    </location>
    <ligand>
        <name>S-adenosyl-L-methionine</name>
        <dbReference type="ChEBI" id="CHEBI:59789"/>
    </ligand>
</feature>
<gene>
    <name evidence="1" type="primary">rlmE</name>
    <name evidence="1" type="synonym">ftsJ</name>
    <name evidence="1" type="synonym">rrmJ</name>
    <name type="ordered locus">VSAL_I0591</name>
</gene>
<proteinExistence type="inferred from homology"/>
<protein>
    <recommendedName>
        <fullName evidence="1">Ribosomal RNA large subunit methyltransferase E</fullName>
        <ecNumber evidence="1">2.1.1.166</ecNumber>
    </recommendedName>
    <alternativeName>
        <fullName evidence="1">23S rRNA Um2552 methyltransferase</fullName>
    </alternativeName>
    <alternativeName>
        <fullName evidence="1">rRNA (uridine-2'-O-)-methyltransferase</fullName>
    </alternativeName>
</protein>
<accession>B6END5</accession>
<sequence>MSKNKLSASSGRWLKEHFDDKYVLEAQKRGYRSRAIFKLEEIQNKDKLLKPGMTVVDLGAAPGGWSQYAVEQVGDSGQVIACDILAMDSIAGVSFLQGDFREEAVLDALLERIQPDMVDVVMSDMAPNMSGNPSVDQPRSMYLVELALDMCRQVLAPNGSFTVKVFQGESFDAYLQEVRKVFKVVKIRKPDSSRARSREVYIVATGYKG</sequence>
<reference key="1">
    <citation type="journal article" date="2008" name="BMC Genomics">
        <title>The genome sequence of the fish pathogen Aliivibrio salmonicida strain LFI1238 shows extensive evidence of gene decay.</title>
        <authorList>
            <person name="Hjerde E."/>
            <person name="Lorentzen M.S."/>
            <person name="Holden M.T."/>
            <person name="Seeger K."/>
            <person name="Paulsen S."/>
            <person name="Bason N."/>
            <person name="Churcher C."/>
            <person name="Harris D."/>
            <person name="Norbertczak H."/>
            <person name="Quail M.A."/>
            <person name="Sanders S."/>
            <person name="Thurston S."/>
            <person name="Parkhill J."/>
            <person name="Willassen N.P."/>
            <person name="Thomson N.R."/>
        </authorList>
    </citation>
    <scope>NUCLEOTIDE SEQUENCE [LARGE SCALE GENOMIC DNA]</scope>
    <source>
        <strain>LFI1238</strain>
    </source>
</reference>
<keyword id="KW-0963">Cytoplasm</keyword>
<keyword id="KW-0489">Methyltransferase</keyword>
<keyword id="KW-0698">rRNA processing</keyword>
<keyword id="KW-0949">S-adenosyl-L-methionine</keyword>
<keyword id="KW-0808">Transferase</keyword>
<dbReference type="EC" id="2.1.1.166" evidence="1"/>
<dbReference type="EMBL" id="FM178379">
    <property type="protein sequence ID" value="CAQ78276.1"/>
    <property type="molecule type" value="Genomic_DNA"/>
</dbReference>
<dbReference type="RefSeq" id="WP_012549399.1">
    <property type="nucleotide sequence ID" value="NC_011312.1"/>
</dbReference>
<dbReference type="SMR" id="B6END5"/>
<dbReference type="KEGG" id="vsa:VSAL_I0591"/>
<dbReference type="eggNOG" id="COG0293">
    <property type="taxonomic scope" value="Bacteria"/>
</dbReference>
<dbReference type="HOGENOM" id="CLU_009422_4_0_6"/>
<dbReference type="Proteomes" id="UP000001730">
    <property type="component" value="Chromosome 1"/>
</dbReference>
<dbReference type="GO" id="GO:0005737">
    <property type="term" value="C:cytoplasm"/>
    <property type="evidence" value="ECO:0007669"/>
    <property type="project" value="UniProtKB-SubCell"/>
</dbReference>
<dbReference type="GO" id="GO:0008650">
    <property type="term" value="F:rRNA (uridine-2'-O-)-methyltransferase activity"/>
    <property type="evidence" value="ECO:0007669"/>
    <property type="project" value="UniProtKB-UniRule"/>
</dbReference>
<dbReference type="FunFam" id="3.40.50.150:FF:000005">
    <property type="entry name" value="Ribosomal RNA large subunit methyltransferase E"/>
    <property type="match status" value="1"/>
</dbReference>
<dbReference type="Gene3D" id="3.40.50.150">
    <property type="entry name" value="Vaccinia Virus protein VP39"/>
    <property type="match status" value="1"/>
</dbReference>
<dbReference type="HAMAP" id="MF_01547">
    <property type="entry name" value="RNA_methyltr_E"/>
    <property type="match status" value="1"/>
</dbReference>
<dbReference type="InterPro" id="IPR050082">
    <property type="entry name" value="RNA_methyltr_RlmE"/>
</dbReference>
<dbReference type="InterPro" id="IPR002877">
    <property type="entry name" value="RNA_MeTrfase_FtsJ_dom"/>
</dbReference>
<dbReference type="InterPro" id="IPR015507">
    <property type="entry name" value="rRNA-MeTfrase_E"/>
</dbReference>
<dbReference type="InterPro" id="IPR029063">
    <property type="entry name" value="SAM-dependent_MTases_sf"/>
</dbReference>
<dbReference type="NCBIfam" id="NF008390">
    <property type="entry name" value="PRK11188.1"/>
    <property type="match status" value="1"/>
</dbReference>
<dbReference type="PANTHER" id="PTHR10920">
    <property type="entry name" value="RIBOSOMAL RNA METHYLTRANSFERASE"/>
    <property type="match status" value="1"/>
</dbReference>
<dbReference type="PANTHER" id="PTHR10920:SF18">
    <property type="entry name" value="RRNA METHYLTRANSFERASE 2, MITOCHONDRIAL"/>
    <property type="match status" value="1"/>
</dbReference>
<dbReference type="Pfam" id="PF01728">
    <property type="entry name" value="FtsJ"/>
    <property type="match status" value="1"/>
</dbReference>
<dbReference type="PIRSF" id="PIRSF005461">
    <property type="entry name" value="23S_rRNA_mtase"/>
    <property type="match status" value="1"/>
</dbReference>
<dbReference type="SUPFAM" id="SSF53335">
    <property type="entry name" value="S-adenosyl-L-methionine-dependent methyltransferases"/>
    <property type="match status" value="1"/>
</dbReference>
<evidence type="ECO:0000255" key="1">
    <source>
        <dbReference type="HAMAP-Rule" id="MF_01547"/>
    </source>
</evidence>
<name>RLME_ALISL</name>
<comment type="function">
    <text evidence="1">Specifically methylates the uridine in position 2552 of 23S rRNA at the 2'-O position of the ribose in the fully assembled 50S ribosomal subunit.</text>
</comment>
<comment type="catalytic activity">
    <reaction evidence="1">
        <text>uridine(2552) in 23S rRNA + S-adenosyl-L-methionine = 2'-O-methyluridine(2552) in 23S rRNA + S-adenosyl-L-homocysteine + H(+)</text>
        <dbReference type="Rhea" id="RHEA:42720"/>
        <dbReference type="Rhea" id="RHEA-COMP:10202"/>
        <dbReference type="Rhea" id="RHEA-COMP:10203"/>
        <dbReference type="ChEBI" id="CHEBI:15378"/>
        <dbReference type="ChEBI" id="CHEBI:57856"/>
        <dbReference type="ChEBI" id="CHEBI:59789"/>
        <dbReference type="ChEBI" id="CHEBI:65315"/>
        <dbReference type="ChEBI" id="CHEBI:74478"/>
        <dbReference type="EC" id="2.1.1.166"/>
    </reaction>
</comment>
<comment type="subcellular location">
    <subcellularLocation>
        <location evidence="1">Cytoplasm</location>
    </subcellularLocation>
</comment>
<comment type="similarity">
    <text evidence="1">Belongs to the class I-like SAM-binding methyltransferase superfamily. RNA methyltransferase RlmE family.</text>
</comment>